<comment type="function">
    <text evidence="2">Carrier of the growing fatty acid chain in fatty acid biosynthesis.</text>
</comment>
<comment type="pathway">
    <text evidence="2">Lipid metabolism; fatty acid biosynthesis.</text>
</comment>
<comment type="subcellular location">
    <subcellularLocation>
        <location evidence="2">Cytoplasm</location>
    </subcellularLocation>
</comment>
<comment type="PTM">
    <text evidence="2">4'-phosphopantetheine is transferred from CoA to a specific serine of apo-ACP by AcpS. This modification is essential for activity because fatty acids are bound in thioester linkage to the sulfhydryl of the prosthetic group.</text>
</comment>
<comment type="similarity">
    <text evidence="2">Belongs to the acyl carrier protein (ACP) family.</text>
</comment>
<organism>
    <name type="scientific">Yersinia pseudotuberculosis serotype I (strain IP32953)</name>
    <dbReference type="NCBI Taxonomy" id="273123"/>
    <lineage>
        <taxon>Bacteria</taxon>
        <taxon>Pseudomonadati</taxon>
        <taxon>Pseudomonadota</taxon>
        <taxon>Gammaproteobacteria</taxon>
        <taxon>Enterobacterales</taxon>
        <taxon>Yersiniaceae</taxon>
        <taxon>Yersinia</taxon>
    </lineage>
</organism>
<dbReference type="EMBL" id="BX936398">
    <property type="protein sequence ID" value="CAH21708.1"/>
    <property type="molecule type" value="Genomic_DNA"/>
</dbReference>
<dbReference type="RefSeq" id="WP_002220787.1">
    <property type="nucleotide sequence ID" value="NZ_CP009712.1"/>
</dbReference>
<dbReference type="SMR" id="Q669L4"/>
<dbReference type="GeneID" id="97455792"/>
<dbReference type="KEGG" id="ypo:BZ17_4166"/>
<dbReference type="KEGG" id="yps:YPTB2470"/>
<dbReference type="PATRIC" id="fig|273123.14.peg.4389"/>
<dbReference type="UniPathway" id="UPA00094"/>
<dbReference type="Proteomes" id="UP000001011">
    <property type="component" value="Chromosome"/>
</dbReference>
<dbReference type="GO" id="GO:0005829">
    <property type="term" value="C:cytosol"/>
    <property type="evidence" value="ECO:0007669"/>
    <property type="project" value="TreeGrafter"/>
</dbReference>
<dbReference type="GO" id="GO:0016020">
    <property type="term" value="C:membrane"/>
    <property type="evidence" value="ECO:0007669"/>
    <property type="project" value="GOC"/>
</dbReference>
<dbReference type="GO" id="GO:0000035">
    <property type="term" value="F:acyl binding"/>
    <property type="evidence" value="ECO:0007669"/>
    <property type="project" value="TreeGrafter"/>
</dbReference>
<dbReference type="GO" id="GO:0000036">
    <property type="term" value="F:acyl carrier activity"/>
    <property type="evidence" value="ECO:0007669"/>
    <property type="project" value="UniProtKB-UniRule"/>
</dbReference>
<dbReference type="GO" id="GO:0009245">
    <property type="term" value="P:lipid A biosynthetic process"/>
    <property type="evidence" value="ECO:0007669"/>
    <property type="project" value="TreeGrafter"/>
</dbReference>
<dbReference type="FunFam" id="1.10.1200.10:FF:000001">
    <property type="entry name" value="Acyl carrier protein"/>
    <property type="match status" value="1"/>
</dbReference>
<dbReference type="Gene3D" id="1.10.1200.10">
    <property type="entry name" value="ACP-like"/>
    <property type="match status" value="1"/>
</dbReference>
<dbReference type="HAMAP" id="MF_01217">
    <property type="entry name" value="Acyl_carrier"/>
    <property type="match status" value="1"/>
</dbReference>
<dbReference type="InterPro" id="IPR003231">
    <property type="entry name" value="ACP"/>
</dbReference>
<dbReference type="InterPro" id="IPR036736">
    <property type="entry name" value="ACP-like_sf"/>
</dbReference>
<dbReference type="InterPro" id="IPR009081">
    <property type="entry name" value="PP-bd_ACP"/>
</dbReference>
<dbReference type="InterPro" id="IPR006162">
    <property type="entry name" value="Ppantetheine_attach_site"/>
</dbReference>
<dbReference type="NCBIfam" id="TIGR00517">
    <property type="entry name" value="acyl_carrier"/>
    <property type="match status" value="1"/>
</dbReference>
<dbReference type="NCBIfam" id="NF002148">
    <property type="entry name" value="PRK00982.1-2"/>
    <property type="match status" value="1"/>
</dbReference>
<dbReference type="NCBIfam" id="NF002149">
    <property type="entry name" value="PRK00982.1-3"/>
    <property type="match status" value="1"/>
</dbReference>
<dbReference type="NCBIfam" id="NF002150">
    <property type="entry name" value="PRK00982.1-4"/>
    <property type="match status" value="1"/>
</dbReference>
<dbReference type="NCBIfam" id="NF002151">
    <property type="entry name" value="PRK00982.1-5"/>
    <property type="match status" value="1"/>
</dbReference>
<dbReference type="PANTHER" id="PTHR20863">
    <property type="entry name" value="ACYL CARRIER PROTEIN"/>
    <property type="match status" value="1"/>
</dbReference>
<dbReference type="PANTHER" id="PTHR20863:SF76">
    <property type="entry name" value="CARRIER DOMAIN-CONTAINING PROTEIN"/>
    <property type="match status" value="1"/>
</dbReference>
<dbReference type="Pfam" id="PF00550">
    <property type="entry name" value="PP-binding"/>
    <property type="match status" value="1"/>
</dbReference>
<dbReference type="SUPFAM" id="SSF47336">
    <property type="entry name" value="ACP-like"/>
    <property type="match status" value="1"/>
</dbReference>
<dbReference type="PROSITE" id="PS50075">
    <property type="entry name" value="CARRIER"/>
    <property type="match status" value="1"/>
</dbReference>
<dbReference type="PROSITE" id="PS00012">
    <property type="entry name" value="PHOSPHOPANTETHEINE"/>
    <property type="match status" value="1"/>
</dbReference>
<reference key="1">
    <citation type="journal article" date="2004" name="Proc. Natl. Acad. Sci. U.S.A.">
        <title>Insights into the evolution of Yersinia pestis through whole-genome comparison with Yersinia pseudotuberculosis.</title>
        <authorList>
            <person name="Chain P.S.G."/>
            <person name="Carniel E."/>
            <person name="Larimer F.W."/>
            <person name="Lamerdin J."/>
            <person name="Stoutland P.O."/>
            <person name="Regala W.M."/>
            <person name="Georgescu A.M."/>
            <person name="Vergez L.M."/>
            <person name="Land M.L."/>
            <person name="Motin V.L."/>
            <person name="Brubaker R.R."/>
            <person name="Fowler J."/>
            <person name="Hinnebusch J."/>
            <person name="Marceau M."/>
            <person name="Medigue C."/>
            <person name="Simonet M."/>
            <person name="Chenal-Francisque V."/>
            <person name="Souza B."/>
            <person name="Dacheux D."/>
            <person name="Elliott J.M."/>
            <person name="Derbise A."/>
            <person name="Hauser L.J."/>
            <person name="Garcia E."/>
        </authorList>
    </citation>
    <scope>NUCLEOTIDE SEQUENCE [LARGE SCALE GENOMIC DNA]</scope>
    <source>
        <strain>IP32953</strain>
    </source>
</reference>
<accession>Q669L4</accession>
<name>ACP_YERPS</name>
<gene>
    <name evidence="2" type="primary">acpP</name>
    <name type="ordered locus">YPTB2470</name>
</gene>
<sequence>MSTIEERVKKIIVEQLGVKEDEVKNSASFVEDLGADSLDTVELVMALEEEFDTEIPDEEAEKITTVQAAIDFINANQQ</sequence>
<keyword id="KW-0963">Cytoplasm</keyword>
<keyword id="KW-0275">Fatty acid biosynthesis</keyword>
<keyword id="KW-0276">Fatty acid metabolism</keyword>
<keyword id="KW-0444">Lipid biosynthesis</keyword>
<keyword id="KW-0443">Lipid metabolism</keyword>
<keyword id="KW-0596">Phosphopantetheine</keyword>
<keyword id="KW-0597">Phosphoprotein</keyword>
<protein>
    <recommendedName>
        <fullName evidence="2">Acyl carrier protein</fullName>
        <shortName evidence="2">ACP</shortName>
    </recommendedName>
</protein>
<feature type="initiator methionine" description="Removed" evidence="1">
    <location>
        <position position="1"/>
    </location>
</feature>
<feature type="chain" id="PRO_0000180227" description="Acyl carrier protein">
    <location>
        <begin position="2"/>
        <end position="78"/>
    </location>
</feature>
<feature type="domain" description="Carrier" evidence="3">
    <location>
        <begin position="2"/>
        <end position="77"/>
    </location>
</feature>
<feature type="modified residue" description="O-(pantetheine 4'-phosphoryl)serine" evidence="3">
    <location>
        <position position="37"/>
    </location>
</feature>
<evidence type="ECO:0000250" key="1"/>
<evidence type="ECO:0000255" key="2">
    <source>
        <dbReference type="HAMAP-Rule" id="MF_01217"/>
    </source>
</evidence>
<evidence type="ECO:0000255" key="3">
    <source>
        <dbReference type="PROSITE-ProRule" id="PRU00258"/>
    </source>
</evidence>
<proteinExistence type="inferred from homology"/>